<accession>B3ESU2</accession>
<keyword id="KW-0997">Cell inner membrane</keyword>
<keyword id="KW-1003">Cell membrane</keyword>
<keyword id="KW-0342">GTP-binding</keyword>
<keyword id="KW-0378">Hydrolase</keyword>
<keyword id="KW-0472">Membrane</keyword>
<keyword id="KW-0547">Nucleotide-binding</keyword>
<keyword id="KW-0648">Protein biosynthesis</keyword>
<keyword id="KW-1185">Reference proteome</keyword>
<name>LEPA_AMOA5</name>
<evidence type="ECO:0000255" key="1">
    <source>
        <dbReference type="HAMAP-Rule" id="MF_00071"/>
    </source>
</evidence>
<gene>
    <name evidence="1" type="primary">lepA</name>
    <name type="ordered locus">Aasi_0929</name>
</gene>
<proteinExistence type="inferred from homology"/>
<reference key="1">
    <citation type="journal article" date="2010" name="J. Bacteriol.">
        <title>The genome of the amoeba symbiont 'Candidatus Amoebophilus asiaticus' reveals common mechanisms for host cell interaction among amoeba-associated bacteria.</title>
        <authorList>
            <person name="Schmitz-Esser S."/>
            <person name="Tischler P."/>
            <person name="Arnold R."/>
            <person name="Montanaro J."/>
            <person name="Wagner M."/>
            <person name="Rattei T."/>
            <person name="Horn M."/>
        </authorList>
    </citation>
    <scope>NUCLEOTIDE SEQUENCE [LARGE SCALE GENOMIC DNA]</scope>
    <source>
        <strain>5a2</strain>
    </source>
</reference>
<organism>
    <name type="scientific">Amoebophilus asiaticus (strain 5a2)</name>
    <dbReference type="NCBI Taxonomy" id="452471"/>
    <lineage>
        <taxon>Bacteria</taxon>
        <taxon>Pseudomonadati</taxon>
        <taxon>Bacteroidota</taxon>
        <taxon>Cytophagia</taxon>
        <taxon>Cytophagales</taxon>
        <taxon>Amoebophilaceae</taxon>
        <taxon>Candidatus Amoebophilus</taxon>
    </lineage>
</organism>
<sequence length="595" mass="66421">MKNIRNFCIIAHIDHGKSTLADRLLEATGTISGKASQDQLLDNMDLERERGITIKSHAIQMRYTFKGTDYVLNLIDTPGHVDFSYEVSRSIAACEGALLVIDASQGIEAQTISNLYLALEHDLTIIPVLNKIDLPGAMPEEVKDQIVDLLGCDREDIIPASAKQGIGIEDILQAIIERISPPTGLVDAPLQAMIFDSVYNSFKGVEVYFRIFNGTIKQGDQVKFVNTGKSYEADEIGVLRLGQIPQESLSAGYVGYLISGIKNAREVKVGDTITHVNNPCKEAIKGFEDVKPMVYAGIYPVESNEYEELRTAIEKLQLNDASLVWTHESSAALGIGFRCGFLGMLHMEIVQERLEREFDMTVITTVPSVQFHVIDKQGDLHEVNAPSELPDPNLIDEIQEPFIRAQIITKPEFIGNIIKLCVDKRGALQNQTYLTPERVELTFKLPLAEVVFDFFDKLKTISKGYASLDYELLGFEASKLVKLDILLNEEKIDALSAIVHRDKAYELGKKLCAKLKELLPKQMFEIPIQAAIGTKVIARETIKAMRKNVIAKCYGGDISRKRKLLEKQKKGKKRMRQIGSVEVPQEAFLAVLKLE</sequence>
<dbReference type="EC" id="3.6.5.n1" evidence="1"/>
<dbReference type="EMBL" id="CP001102">
    <property type="protein sequence ID" value="ACE06294.1"/>
    <property type="molecule type" value="Genomic_DNA"/>
</dbReference>
<dbReference type="RefSeq" id="WP_012473061.1">
    <property type="nucleotide sequence ID" value="NC_010830.1"/>
</dbReference>
<dbReference type="SMR" id="B3ESU2"/>
<dbReference type="STRING" id="452471.Aasi_0929"/>
<dbReference type="KEGG" id="aas:Aasi_0929"/>
<dbReference type="eggNOG" id="COG0481">
    <property type="taxonomic scope" value="Bacteria"/>
</dbReference>
<dbReference type="HOGENOM" id="CLU_009995_3_3_10"/>
<dbReference type="OrthoDB" id="9801591at2"/>
<dbReference type="Proteomes" id="UP000001227">
    <property type="component" value="Chromosome"/>
</dbReference>
<dbReference type="GO" id="GO:0005886">
    <property type="term" value="C:plasma membrane"/>
    <property type="evidence" value="ECO:0007669"/>
    <property type="project" value="UniProtKB-SubCell"/>
</dbReference>
<dbReference type="GO" id="GO:0005525">
    <property type="term" value="F:GTP binding"/>
    <property type="evidence" value="ECO:0007669"/>
    <property type="project" value="UniProtKB-UniRule"/>
</dbReference>
<dbReference type="GO" id="GO:0003924">
    <property type="term" value="F:GTPase activity"/>
    <property type="evidence" value="ECO:0007669"/>
    <property type="project" value="UniProtKB-UniRule"/>
</dbReference>
<dbReference type="GO" id="GO:0043022">
    <property type="term" value="F:ribosome binding"/>
    <property type="evidence" value="ECO:0007669"/>
    <property type="project" value="UniProtKB-UniRule"/>
</dbReference>
<dbReference type="GO" id="GO:0003746">
    <property type="term" value="F:translation elongation factor activity"/>
    <property type="evidence" value="ECO:0007669"/>
    <property type="project" value="UniProtKB-UniRule"/>
</dbReference>
<dbReference type="GO" id="GO:0045727">
    <property type="term" value="P:positive regulation of translation"/>
    <property type="evidence" value="ECO:0007669"/>
    <property type="project" value="UniProtKB-UniRule"/>
</dbReference>
<dbReference type="CDD" id="cd03699">
    <property type="entry name" value="EF4_II"/>
    <property type="match status" value="1"/>
</dbReference>
<dbReference type="CDD" id="cd16260">
    <property type="entry name" value="EF4_III"/>
    <property type="match status" value="1"/>
</dbReference>
<dbReference type="CDD" id="cd01890">
    <property type="entry name" value="LepA"/>
    <property type="match status" value="1"/>
</dbReference>
<dbReference type="CDD" id="cd03709">
    <property type="entry name" value="lepA_C"/>
    <property type="match status" value="1"/>
</dbReference>
<dbReference type="FunFam" id="3.40.50.300:FF:000078">
    <property type="entry name" value="Elongation factor 4"/>
    <property type="match status" value="1"/>
</dbReference>
<dbReference type="FunFam" id="2.40.30.10:FF:000015">
    <property type="entry name" value="Translation factor GUF1, mitochondrial"/>
    <property type="match status" value="1"/>
</dbReference>
<dbReference type="FunFam" id="3.30.70.240:FF:000007">
    <property type="entry name" value="Translation factor GUF1, mitochondrial"/>
    <property type="match status" value="1"/>
</dbReference>
<dbReference type="FunFam" id="3.30.70.2570:FF:000001">
    <property type="entry name" value="Translation factor GUF1, mitochondrial"/>
    <property type="match status" value="1"/>
</dbReference>
<dbReference type="FunFam" id="3.30.70.870:FF:000004">
    <property type="entry name" value="Translation factor GUF1, mitochondrial"/>
    <property type="match status" value="1"/>
</dbReference>
<dbReference type="Gene3D" id="3.30.70.240">
    <property type="match status" value="1"/>
</dbReference>
<dbReference type="Gene3D" id="3.30.70.2570">
    <property type="entry name" value="Elongation factor 4, C-terminal domain"/>
    <property type="match status" value="1"/>
</dbReference>
<dbReference type="Gene3D" id="3.30.70.870">
    <property type="entry name" value="Elongation Factor G (Translational Gtpase), domain 3"/>
    <property type="match status" value="1"/>
</dbReference>
<dbReference type="Gene3D" id="3.40.50.300">
    <property type="entry name" value="P-loop containing nucleotide triphosphate hydrolases"/>
    <property type="match status" value="1"/>
</dbReference>
<dbReference type="Gene3D" id="2.40.30.10">
    <property type="entry name" value="Translation factors"/>
    <property type="match status" value="1"/>
</dbReference>
<dbReference type="HAMAP" id="MF_00071">
    <property type="entry name" value="LepA"/>
    <property type="match status" value="1"/>
</dbReference>
<dbReference type="InterPro" id="IPR006297">
    <property type="entry name" value="EF-4"/>
</dbReference>
<dbReference type="InterPro" id="IPR035647">
    <property type="entry name" value="EFG_III/V"/>
</dbReference>
<dbReference type="InterPro" id="IPR000640">
    <property type="entry name" value="EFG_V-like"/>
</dbReference>
<dbReference type="InterPro" id="IPR004161">
    <property type="entry name" value="EFTu-like_2"/>
</dbReference>
<dbReference type="InterPro" id="IPR038363">
    <property type="entry name" value="LepA_C_sf"/>
</dbReference>
<dbReference type="InterPro" id="IPR013842">
    <property type="entry name" value="LepA_CTD"/>
</dbReference>
<dbReference type="InterPro" id="IPR035654">
    <property type="entry name" value="LepA_IV"/>
</dbReference>
<dbReference type="InterPro" id="IPR027417">
    <property type="entry name" value="P-loop_NTPase"/>
</dbReference>
<dbReference type="InterPro" id="IPR005225">
    <property type="entry name" value="Small_GTP-bd"/>
</dbReference>
<dbReference type="InterPro" id="IPR000795">
    <property type="entry name" value="T_Tr_GTP-bd_dom"/>
</dbReference>
<dbReference type="InterPro" id="IPR009000">
    <property type="entry name" value="Transl_B-barrel_sf"/>
</dbReference>
<dbReference type="NCBIfam" id="TIGR01393">
    <property type="entry name" value="lepA"/>
    <property type="match status" value="1"/>
</dbReference>
<dbReference type="NCBIfam" id="TIGR00231">
    <property type="entry name" value="small_GTP"/>
    <property type="match status" value="1"/>
</dbReference>
<dbReference type="PANTHER" id="PTHR43512:SF4">
    <property type="entry name" value="TRANSLATION FACTOR GUF1 HOMOLOG, CHLOROPLASTIC"/>
    <property type="match status" value="1"/>
</dbReference>
<dbReference type="PANTHER" id="PTHR43512">
    <property type="entry name" value="TRANSLATION FACTOR GUF1-RELATED"/>
    <property type="match status" value="1"/>
</dbReference>
<dbReference type="Pfam" id="PF00679">
    <property type="entry name" value="EFG_C"/>
    <property type="match status" value="1"/>
</dbReference>
<dbReference type="Pfam" id="PF00009">
    <property type="entry name" value="GTP_EFTU"/>
    <property type="match status" value="1"/>
</dbReference>
<dbReference type="Pfam" id="PF03144">
    <property type="entry name" value="GTP_EFTU_D2"/>
    <property type="match status" value="1"/>
</dbReference>
<dbReference type="Pfam" id="PF06421">
    <property type="entry name" value="LepA_C"/>
    <property type="match status" value="1"/>
</dbReference>
<dbReference type="PRINTS" id="PR00315">
    <property type="entry name" value="ELONGATNFCT"/>
</dbReference>
<dbReference type="SUPFAM" id="SSF54980">
    <property type="entry name" value="EF-G C-terminal domain-like"/>
    <property type="match status" value="2"/>
</dbReference>
<dbReference type="SUPFAM" id="SSF52540">
    <property type="entry name" value="P-loop containing nucleoside triphosphate hydrolases"/>
    <property type="match status" value="1"/>
</dbReference>
<dbReference type="SUPFAM" id="SSF50447">
    <property type="entry name" value="Translation proteins"/>
    <property type="match status" value="1"/>
</dbReference>
<dbReference type="PROSITE" id="PS51722">
    <property type="entry name" value="G_TR_2"/>
    <property type="match status" value="1"/>
</dbReference>
<feature type="chain" id="PRO_1000092370" description="Elongation factor 4">
    <location>
        <begin position="1"/>
        <end position="595"/>
    </location>
</feature>
<feature type="domain" description="tr-type G">
    <location>
        <begin position="2"/>
        <end position="183"/>
    </location>
</feature>
<feature type="binding site" evidence="1">
    <location>
        <begin position="14"/>
        <end position="19"/>
    </location>
    <ligand>
        <name>GTP</name>
        <dbReference type="ChEBI" id="CHEBI:37565"/>
    </ligand>
</feature>
<feature type="binding site" evidence="1">
    <location>
        <begin position="130"/>
        <end position="133"/>
    </location>
    <ligand>
        <name>GTP</name>
        <dbReference type="ChEBI" id="CHEBI:37565"/>
    </ligand>
</feature>
<comment type="function">
    <text evidence="1">Required for accurate and efficient protein synthesis under certain stress conditions. May act as a fidelity factor of the translation reaction, by catalyzing a one-codon backward translocation of tRNAs on improperly translocated ribosomes. Back-translocation proceeds from a post-translocation (POST) complex to a pre-translocation (PRE) complex, thus giving elongation factor G a second chance to translocate the tRNAs correctly. Binds to ribosomes in a GTP-dependent manner.</text>
</comment>
<comment type="catalytic activity">
    <reaction evidence="1">
        <text>GTP + H2O = GDP + phosphate + H(+)</text>
        <dbReference type="Rhea" id="RHEA:19669"/>
        <dbReference type="ChEBI" id="CHEBI:15377"/>
        <dbReference type="ChEBI" id="CHEBI:15378"/>
        <dbReference type="ChEBI" id="CHEBI:37565"/>
        <dbReference type="ChEBI" id="CHEBI:43474"/>
        <dbReference type="ChEBI" id="CHEBI:58189"/>
        <dbReference type="EC" id="3.6.5.n1"/>
    </reaction>
</comment>
<comment type="subcellular location">
    <subcellularLocation>
        <location evidence="1">Cell inner membrane</location>
        <topology evidence="1">Peripheral membrane protein</topology>
        <orientation evidence="1">Cytoplasmic side</orientation>
    </subcellularLocation>
</comment>
<comment type="similarity">
    <text evidence="1">Belongs to the TRAFAC class translation factor GTPase superfamily. Classic translation factor GTPase family. LepA subfamily.</text>
</comment>
<protein>
    <recommendedName>
        <fullName evidence="1">Elongation factor 4</fullName>
        <shortName evidence="1">EF-4</shortName>
        <ecNumber evidence="1">3.6.5.n1</ecNumber>
    </recommendedName>
    <alternativeName>
        <fullName evidence="1">Ribosomal back-translocase LepA</fullName>
    </alternativeName>
</protein>